<feature type="chain" id="PRO_1000185405" description="Galactose-6-phosphate isomerase subunit LacB">
    <location>
        <begin position="1"/>
        <end position="171"/>
    </location>
</feature>
<name>LACB_STRZJ</name>
<accession>C1CEF3</accession>
<reference key="1">
    <citation type="journal article" date="2010" name="Genome Biol.">
        <title>Structure and dynamics of the pan-genome of Streptococcus pneumoniae and closely related species.</title>
        <authorList>
            <person name="Donati C."/>
            <person name="Hiller N.L."/>
            <person name="Tettelin H."/>
            <person name="Muzzi A."/>
            <person name="Croucher N.J."/>
            <person name="Angiuoli S.V."/>
            <person name="Oggioni M."/>
            <person name="Dunning Hotopp J.C."/>
            <person name="Hu F.Z."/>
            <person name="Riley D.R."/>
            <person name="Covacci A."/>
            <person name="Mitchell T.J."/>
            <person name="Bentley S.D."/>
            <person name="Kilian M."/>
            <person name="Ehrlich G.D."/>
            <person name="Rappuoli R."/>
            <person name="Moxon E.R."/>
            <person name="Masignani V."/>
        </authorList>
    </citation>
    <scope>NUCLEOTIDE SEQUENCE [LARGE SCALE GENOMIC DNA]</scope>
    <source>
        <strain>JJA</strain>
    </source>
</reference>
<comment type="catalytic activity">
    <reaction evidence="1">
        <text>aldehydo-D-galactose 6-phosphate = keto-D-tagatose 6-phosphate</text>
        <dbReference type="Rhea" id="RHEA:13033"/>
        <dbReference type="ChEBI" id="CHEBI:58255"/>
        <dbReference type="ChEBI" id="CHEBI:134283"/>
        <dbReference type="EC" id="5.3.1.26"/>
    </reaction>
</comment>
<comment type="pathway">
    <text evidence="1">Carbohydrate metabolism; D-galactose 6-phosphate degradation; D-tagatose 6-phosphate from D-galactose 6-phosphate: step 1/1.</text>
</comment>
<comment type="subunit">
    <text evidence="1">Heteromultimeric protein consisting of LacA and LacB.</text>
</comment>
<comment type="similarity">
    <text evidence="1">Belongs to the LacAB/RpiB family.</text>
</comment>
<protein>
    <recommendedName>
        <fullName evidence="1">Galactose-6-phosphate isomerase subunit LacB</fullName>
        <ecNumber evidence="1">5.3.1.26</ecNumber>
    </recommendedName>
</protein>
<keyword id="KW-0413">Isomerase</keyword>
<keyword id="KW-0423">Lactose metabolism</keyword>
<evidence type="ECO:0000255" key="1">
    <source>
        <dbReference type="HAMAP-Rule" id="MF_01556"/>
    </source>
</evidence>
<gene>
    <name evidence="1" type="primary">lacB</name>
    <name type="ordered locus">SPJ_1108</name>
</gene>
<proteinExistence type="inferred from homology"/>
<dbReference type="EC" id="5.3.1.26" evidence="1"/>
<dbReference type="EMBL" id="CP000919">
    <property type="protein sequence ID" value="ACO18724.1"/>
    <property type="molecule type" value="Genomic_DNA"/>
</dbReference>
<dbReference type="RefSeq" id="WP_001216918.1">
    <property type="nucleotide sequence ID" value="NC_012466.1"/>
</dbReference>
<dbReference type="SMR" id="C1CEF3"/>
<dbReference type="KEGG" id="sjj:SPJ_1108"/>
<dbReference type="HOGENOM" id="CLU_091396_2_0_9"/>
<dbReference type="UniPathway" id="UPA00702">
    <property type="reaction ID" value="UER00714"/>
</dbReference>
<dbReference type="Proteomes" id="UP000002206">
    <property type="component" value="Chromosome"/>
</dbReference>
<dbReference type="GO" id="GO:0050044">
    <property type="term" value="F:galactose-6-phosphate isomerase activity"/>
    <property type="evidence" value="ECO:0007669"/>
    <property type="project" value="UniProtKB-UniRule"/>
</dbReference>
<dbReference type="GO" id="GO:0004751">
    <property type="term" value="F:ribose-5-phosphate isomerase activity"/>
    <property type="evidence" value="ECO:0007669"/>
    <property type="project" value="TreeGrafter"/>
</dbReference>
<dbReference type="GO" id="GO:0019316">
    <property type="term" value="P:D-allose catabolic process"/>
    <property type="evidence" value="ECO:0007669"/>
    <property type="project" value="TreeGrafter"/>
</dbReference>
<dbReference type="GO" id="GO:0019388">
    <property type="term" value="P:galactose catabolic process"/>
    <property type="evidence" value="ECO:0007669"/>
    <property type="project" value="UniProtKB-UniPathway"/>
</dbReference>
<dbReference type="GO" id="GO:0019512">
    <property type="term" value="P:lactose catabolic process via tagatose-6-phosphate"/>
    <property type="evidence" value="ECO:0007669"/>
    <property type="project" value="UniProtKB-UniRule"/>
</dbReference>
<dbReference type="GO" id="GO:0009052">
    <property type="term" value="P:pentose-phosphate shunt, non-oxidative branch"/>
    <property type="evidence" value="ECO:0007669"/>
    <property type="project" value="TreeGrafter"/>
</dbReference>
<dbReference type="Gene3D" id="3.40.1400.10">
    <property type="entry name" value="Sugar-phosphate isomerase, RpiB/LacA/LacB"/>
    <property type="match status" value="1"/>
</dbReference>
<dbReference type="HAMAP" id="MF_01556">
    <property type="entry name" value="LacB"/>
    <property type="match status" value="1"/>
</dbReference>
<dbReference type="InterPro" id="IPR004784">
    <property type="entry name" value="LacB"/>
</dbReference>
<dbReference type="InterPro" id="IPR003500">
    <property type="entry name" value="RpiB_LacA_LacB"/>
</dbReference>
<dbReference type="InterPro" id="IPR036569">
    <property type="entry name" value="RpiB_LacA_LacB_sf"/>
</dbReference>
<dbReference type="NCBIfam" id="TIGR01119">
    <property type="entry name" value="lacB"/>
    <property type="match status" value="1"/>
</dbReference>
<dbReference type="NCBIfam" id="NF004051">
    <property type="entry name" value="PRK05571.1"/>
    <property type="match status" value="1"/>
</dbReference>
<dbReference type="NCBIfam" id="NF006381">
    <property type="entry name" value="PRK08622.1"/>
    <property type="match status" value="1"/>
</dbReference>
<dbReference type="NCBIfam" id="NF009258">
    <property type="entry name" value="PRK12615.1"/>
    <property type="match status" value="1"/>
</dbReference>
<dbReference type="NCBIfam" id="TIGR00689">
    <property type="entry name" value="rpiB_lacA_lacB"/>
    <property type="match status" value="1"/>
</dbReference>
<dbReference type="PANTHER" id="PTHR30345:SF0">
    <property type="entry name" value="DNA DAMAGE-REPAIR_TOLERATION PROTEIN DRT102"/>
    <property type="match status" value="1"/>
</dbReference>
<dbReference type="PANTHER" id="PTHR30345">
    <property type="entry name" value="RIBOSE-5-PHOSPHATE ISOMERASE B"/>
    <property type="match status" value="1"/>
</dbReference>
<dbReference type="Pfam" id="PF02502">
    <property type="entry name" value="LacAB_rpiB"/>
    <property type="match status" value="1"/>
</dbReference>
<dbReference type="PIRSF" id="PIRSF005384">
    <property type="entry name" value="RpiB_LacA_B"/>
    <property type="match status" value="1"/>
</dbReference>
<dbReference type="SUPFAM" id="SSF89623">
    <property type="entry name" value="Ribose/Galactose isomerase RpiB/AlsB"/>
    <property type="match status" value="1"/>
</dbReference>
<sequence>MRIAIGCDHIVTDEKMAVSEFLKSKGYEVIDFGTYDHTRTHYPIFGKKVGEAVTSGQADLGVCICGTGVGINNAVNKVPGVRSALVRDMTTALYAKEQLNANVIGFGGKITGELLMCDIIEAFIHAEYKPTEENKKLIAKIEHVESHNAQQTDANFFTEFLEKWDRGEYHD</sequence>
<organism>
    <name type="scientific">Streptococcus pneumoniae (strain JJA)</name>
    <dbReference type="NCBI Taxonomy" id="488222"/>
    <lineage>
        <taxon>Bacteria</taxon>
        <taxon>Bacillati</taxon>
        <taxon>Bacillota</taxon>
        <taxon>Bacilli</taxon>
        <taxon>Lactobacillales</taxon>
        <taxon>Streptococcaceae</taxon>
        <taxon>Streptococcus</taxon>
    </lineage>
</organism>